<dbReference type="EMBL" id="AE005674">
    <property type="protein sequence ID" value="AAN42172.1"/>
    <property type="molecule type" value="Genomic_DNA"/>
</dbReference>
<dbReference type="EMBL" id="AE014073">
    <property type="protein sequence ID" value="AAP16042.1"/>
    <property type="molecule type" value="Genomic_DNA"/>
</dbReference>
<dbReference type="RefSeq" id="WP_000276167.1">
    <property type="nucleotide sequence ID" value="NZ_WPGW01000089.1"/>
</dbReference>
<dbReference type="SMR" id="Q83M07"/>
<dbReference type="STRING" id="198214.SF0526"/>
<dbReference type="PaxDb" id="198214-SF0526"/>
<dbReference type="KEGG" id="sfl:SF0526"/>
<dbReference type="KEGG" id="sfx:S0531"/>
<dbReference type="PATRIC" id="fig|198214.7.peg.611"/>
<dbReference type="HOGENOM" id="CLU_049301_12_0_6"/>
<dbReference type="Proteomes" id="UP000001006">
    <property type="component" value="Chromosome"/>
</dbReference>
<dbReference type="Proteomes" id="UP000002673">
    <property type="component" value="Chromosome"/>
</dbReference>
<dbReference type="CDD" id="cd00293">
    <property type="entry name" value="USP-like"/>
    <property type="match status" value="1"/>
</dbReference>
<dbReference type="FunFam" id="3.40.50.620:FF:000076">
    <property type="entry name" value="Universal stress protein G"/>
    <property type="match status" value="1"/>
</dbReference>
<dbReference type="Gene3D" id="3.40.50.620">
    <property type="entry name" value="HUPs"/>
    <property type="match status" value="1"/>
</dbReference>
<dbReference type="InterPro" id="IPR014729">
    <property type="entry name" value="Rossmann-like_a/b/a_fold"/>
</dbReference>
<dbReference type="InterPro" id="IPR006015">
    <property type="entry name" value="Universal_stress_UspA"/>
</dbReference>
<dbReference type="InterPro" id="IPR006016">
    <property type="entry name" value="UspA"/>
</dbReference>
<dbReference type="NCBIfam" id="NF012000">
    <property type="entry name" value="PRK15456.1"/>
    <property type="match status" value="1"/>
</dbReference>
<dbReference type="PANTHER" id="PTHR46268">
    <property type="entry name" value="STRESS RESPONSE PROTEIN NHAX"/>
    <property type="match status" value="1"/>
</dbReference>
<dbReference type="PANTHER" id="PTHR46268:SF6">
    <property type="entry name" value="UNIVERSAL STRESS PROTEIN UP12"/>
    <property type="match status" value="1"/>
</dbReference>
<dbReference type="Pfam" id="PF00582">
    <property type="entry name" value="Usp"/>
    <property type="match status" value="1"/>
</dbReference>
<dbReference type="PRINTS" id="PR01438">
    <property type="entry name" value="UNVRSLSTRESS"/>
</dbReference>
<dbReference type="SUPFAM" id="SSF52402">
    <property type="entry name" value="Adenine nucleotide alpha hydrolases-like"/>
    <property type="match status" value="1"/>
</dbReference>
<keyword id="KW-1185">Reference proteome</keyword>
<gene>
    <name type="primary">uspG</name>
    <name type="ordered locus">SF0526</name>
    <name type="ordered locus">S0531</name>
</gene>
<organism>
    <name type="scientific">Shigella flexneri</name>
    <dbReference type="NCBI Taxonomy" id="623"/>
    <lineage>
        <taxon>Bacteria</taxon>
        <taxon>Pseudomonadati</taxon>
        <taxon>Pseudomonadota</taxon>
        <taxon>Gammaproteobacteria</taxon>
        <taxon>Enterobacterales</taxon>
        <taxon>Enterobacteriaceae</taxon>
        <taxon>Shigella</taxon>
    </lineage>
</organism>
<protein>
    <recommendedName>
        <fullName>Universal stress protein G</fullName>
    </recommendedName>
</protein>
<reference key="1">
    <citation type="journal article" date="2002" name="Nucleic Acids Res.">
        <title>Genome sequence of Shigella flexneri 2a: insights into pathogenicity through comparison with genomes of Escherichia coli K12 and O157.</title>
        <authorList>
            <person name="Jin Q."/>
            <person name="Yuan Z."/>
            <person name="Xu J."/>
            <person name="Wang Y."/>
            <person name="Shen Y."/>
            <person name="Lu W."/>
            <person name="Wang J."/>
            <person name="Liu H."/>
            <person name="Yang J."/>
            <person name="Yang F."/>
            <person name="Zhang X."/>
            <person name="Zhang J."/>
            <person name="Yang G."/>
            <person name="Wu H."/>
            <person name="Qu D."/>
            <person name="Dong J."/>
            <person name="Sun L."/>
            <person name="Xue Y."/>
            <person name="Zhao A."/>
            <person name="Gao Y."/>
            <person name="Zhu J."/>
            <person name="Kan B."/>
            <person name="Ding K."/>
            <person name="Chen S."/>
            <person name="Cheng H."/>
            <person name="Yao Z."/>
            <person name="He B."/>
            <person name="Chen R."/>
            <person name="Ma D."/>
            <person name="Qiang B."/>
            <person name="Wen Y."/>
            <person name="Hou Y."/>
            <person name="Yu J."/>
        </authorList>
    </citation>
    <scope>NUCLEOTIDE SEQUENCE [LARGE SCALE GENOMIC DNA]</scope>
    <source>
        <strain>301 / Serotype 2a</strain>
    </source>
</reference>
<reference key="2">
    <citation type="journal article" date="2003" name="Infect. Immun.">
        <title>Complete genome sequence and comparative genomics of Shigella flexneri serotype 2a strain 2457T.</title>
        <authorList>
            <person name="Wei J."/>
            <person name="Goldberg M.B."/>
            <person name="Burland V."/>
            <person name="Venkatesan M.M."/>
            <person name="Deng W."/>
            <person name="Fournier G."/>
            <person name="Mayhew G.F."/>
            <person name="Plunkett G. III"/>
            <person name="Rose D.J."/>
            <person name="Darling A."/>
            <person name="Mau B."/>
            <person name="Perna N.T."/>
            <person name="Payne S.M."/>
            <person name="Runyen-Janecky L.J."/>
            <person name="Zhou S."/>
            <person name="Schwartz D.C."/>
            <person name="Blattner F.R."/>
        </authorList>
    </citation>
    <scope>NUCLEOTIDE SEQUENCE [LARGE SCALE GENOMIC DNA]</scope>
    <source>
        <strain>ATCC 700930 / 2457T / Serotype 2a</strain>
    </source>
</reference>
<accession>Q83M07</accession>
<sequence>MYKAIIMPVDVFEMELSDKAVRHAEFLAQDDGVIHLLHVLPGSASLSLHRFAADVRRFEEHLQHEAEERLQTMVSHFTIDPSRIKQHVRFGSVRDEVNELAEELGADVVVIGSRNPSISTHLLGSNASSVIRHANLPVLVVR</sequence>
<comment type="similarity">
    <text evidence="1">Belongs to the universal stress protein A family.</text>
</comment>
<proteinExistence type="inferred from homology"/>
<feature type="chain" id="PRO_0000147437" description="Universal stress protein G">
    <location>
        <begin position="1"/>
        <end position="142"/>
    </location>
</feature>
<name>USPG_SHIFL</name>
<evidence type="ECO:0000305" key="1"/>